<evidence type="ECO:0000250" key="1">
    <source>
        <dbReference type="UniProtKB" id="P01136"/>
    </source>
</evidence>
<evidence type="ECO:0000255" key="2"/>
<evidence type="ECO:0000255" key="3">
    <source>
        <dbReference type="PROSITE-ProRule" id="PRU00076"/>
    </source>
</evidence>
<evidence type="ECO:0000305" key="4"/>
<protein>
    <recommendedName>
        <fullName>Pro-variola growth factor</fullName>
        <shortName>Pro-VGF</shortName>
    </recommendedName>
    <component>
        <recommendedName>
            <fullName>Variola growth factor</fullName>
            <shortName>VGF</shortName>
        </recommendedName>
        <alternativeName>
            <fullName>Secreted epidermal growth factor-like</fullName>
        </alternativeName>
    </component>
</protein>
<keyword id="KW-1015">Disulfide bond</keyword>
<keyword id="KW-0244">Early protein</keyword>
<keyword id="KW-0245">EGF-like domain</keyword>
<keyword id="KW-0325">Glycoprotein</keyword>
<keyword id="KW-0339">Growth factor</keyword>
<keyword id="KW-1043">Host membrane</keyword>
<keyword id="KW-0945">Host-virus interaction</keyword>
<keyword id="KW-0472">Membrane</keyword>
<keyword id="KW-1185">Reference proteome</keyword>
<keyword id="KW-0964">Secreted</keyword>
<keyword id="KW-0732">Signal</keyword>
<keyword id="KW-0812">Transmembrane</keyword>
<keyword id="KW-1133">Transmembrane helix</keyword>
<dbReference type="EMBL" id="X69198">
    <property type="protein sequence ID" value="CAA48943.1"/>
    <property type="molecule type" value="Genomic_DNA"/>
</dbReference>
<dbReference type="PIR" id="B36837">
    <property type="entry name" value="B36837"/>
</dbReference>
<dbReference type="SMR" id="P0DOP9"/>
<dbReference type="KEGG" id="vg:1486396"/>
<dbReference type="Proteomes" id="UP000002060">
    <property type="component" value="Segment"/>
</dbReference>
<dbReference type="GO" id="GO:0005615">
    <property type="term" value="C:extracellular space"/>
    <property type="evidence" value="ECO:0007669"/>
    <property type="project" value="TreeGrafter"/>
</dbReference>
<dbReference type="GO" id="GO:0033644">
    <property type="term" value="C:host cell membrane"/>
    <property type="evidence" value="ECO:0007669"/>
    <property type="project" value="UniProtKB-SubCell"/>
</dbReference>
<dbReference type="GO" id="GO:0016020">
    <property type="term" value="C:membrane"/>
    <property type="evidence" value="ECO:0007669"/>
    <property type="project" value="UniProtKB-KW"/>
</dbReference>
<dbReference type="GO" id="GO:0005154">
    <property type="term" value="F:epidermal growth factor receptor binding"/>
    <property type="evidence" value="ECO:0007669"/>
    <property type="project" value="InterPro"/>
</dbReference>
<dbReference type="GO" id="GO:0008083">
    <property type="term" value="F:growth factor activity"/>
    <property type="evidence" value="ECO:0007669"/>
    <property type="project" value="UniProtKB-KW"/>
</dbReference>
<dbReference type="GO" id="GO:0007173">
    <property type="term" value="P:epidermal growth factor receptor signaling pathway"/>
    <property type="evidence" value="ECO:0007669"/>
    <property type="project" value="TreeGrafter"/>
</dbReference>
<dbReference type="GO" id="GO:0008284">
    <property type="term" value="P:positive regulation of cell population proliferation"/>
    <property type="evidence" value="ECO:0007669"/>
    <property type="project" value="TreeGrafter"/>
</dbReference>
<dbReference type="GO" id="GO:0045840">
    <property type="term" value="P:positive regulation of mitotic nuclear division"/>
    <property type="evidence" value="ECO:0007669"/>
    <property type="project" value="TreeGrafter"/>
</dbReference>
<dbReference type="Gene3D" id="2.10.25.10">
    <property type="entry name" value="Laminin"/>
    <property type="match status" value="1"/>
</dbReference>
<dbReference type="InterPro" id="IPR000742">
    <property type="entry name" value="EGF-like_dom"/>
</dbReference>
<dbReference type="InterPro" id="IPR011170">
    <property type="entry name" value="GF_C11R"/>
</dbReference>
<dbReference type="PANTHER" id="PTHR10740:SF14">
    <property type="entry name" value="EGF-LIKE DOMAIN-CONTAINING PROTEIN"/>
    <property type="match status" value="1"/>
</dbReference>
<dbReference type="PANTHER" id="PTHR10740">
    <property type="entry name" value="TRANSFORMING GROWTH FACTOR ALPHA"/>
    <property type="match status" value="1"/>
</dbReference>
<dbReference type="PIRSF" id="PIRSF001779">
    <property type="entry name" value="GF_C11R"/>
    <property type="match status" value="1"/>
</dbReference>
<dbReference type="PRINTS" id="PR00009">
    <property type="entry name" value="EGFTGF"/>
</dbReference>
<dbReference type="SUPFAM" id="SSF57196">
    <property type="entry name" value="EGF/Laminin"/>
    <property type="match status" value="1"/>
</dbReference>
<dbReference type="PROSITE" id="PS00022">
    <property type="entry name" value="EGF_1"/>
    <property type="match status" value="1"/>
</dbReference>
<dbReference type="PROSITE" id="PS01186">
    <property type="entry name" value="EGF_2"/>
    <property type="match status" value="1"/>
</dbReference>
<dbReference type="PROSITE" id="PS50026">
    <property type="entry name" value="EGF_3"/>
    <property type="match status" value="1"/>
</dbReference>
<reference key="1">
    <citation type="journal article" date="1993" name="FEBS Lett.">
        <title>Genes of variola and vaccinia viruses necessary to overcome the host protective mechanisms.</title>
        <authorList>
            <person name="Shchelkunov S.N."/>
            <person name="Blinov V.M."/>
            <person name="Sandakhchiev L.S."/>
        </authorList>
    </citation>
    <scope>NUCLEOTIDE SEQUENCE [GENOMIC DNA]</scope>
</reference>
<comment type="function">
    <text evidence="1">Stimulates cellular proliferation (hyperplasia)and mobility around infected cells to promote rapid and efficient spread of infection. This effect is beneficial for virus replication in vivo, because poxviruses replicate possibly better in proliferating cells than in quiescent cells. Acts by binding host EGFR, inducing its dimerization, autophosphorylation and leading to activation of several cellular pathways regulating cell proliferation or cell survival. The activation by host EGFR of mitogen activated protein kinases (MAPK) and extracellular-signal regulated kinases (ERK) are essential for the positive effect of vaccinia growth factor on poxvirus virulence in vivo.</text>
</comment>
<comment type="subunit">
    <text evidence="1">Variola growth factor interacts with host EGFR and promotes EGFR dimerization.</text>
</comment>
<comment type="subcellular location">
    <molecule>Pro-variola growth factor</molecule>
    <subcellularLocation>
        <location evidence="1">Host membrane</location>
    </subcellularLocation>
</comment>
<comment type="subcellular location">
    <molecule>Variola growth factor</molecule>
    <subcellularLocation>
        <location evidence="1">Secreted</location>
    </subcellularLocation>
</comment>
<comment type="induction">
    <text evidence="1">Expressed in the early phase of the viral replicative cycle.</text>
</comment>
<comment type="similarity">
    <text evidence="4">Belongs to the orthopoxvirus OPG019 family.</text>
</comment>
<name>VGF_VAR67</name>
<proteinExistence type="inferred from homology"/>
<sequence length="140" mass="15772">MSMKYLMLLFAAMIIRSFANSGNAIETTLSEITNTTTDIPAIRLCGPEGDRYCFHGICIHARDIDGMYCRCSHGYTGIRCQHVVLVDYQRSEKPNTTTSYIPSPGIVLVLLVSIIVCCLLFVYRFTRRTNKLPLQDMVVP</sequence>
<gene>
    <name type="primary">OPG019</name>
    <name type="ORF">B3R</name>
    <name type="ORF">B4R</name>
    <name type="ORF">C11R</name>
    <name type="ORF">D2L</name>
    <name type="ORF">D4R</name>
</gene>
<accession>P0DOP9</accession>
<accession>P33804</accession>
<accession>Q76Q77</accession>
<accession>Q76UB3</accession>
<accession>Q89066</accession>
<accession>Q89756</accession>
<feature type="signal peptide" evidence="2">
    <location>
        <begin position="1"/>
        <end position="18"/>
    </location>
</feature>
<feature type="chain" id="PRO_0000007600" description="Pro-variola growth factor">
    <location>
        <begin position="19"/>
        <end position="140"/>
    </location>
</feature>
<feature type="chain" id="PRO_0000412919" description="Variola growth factor" evidence="2">
    <location>
        <begin position="19"/>
        <end position="96"/>
    </location>
</feature>
<feature type="topological domain" description="Extracellular" evidence="2">
    <location>
        <begin position="19"/>
        <end position="100"/>
    </location>
</feature>
<feature type="transmembrane region" description="Helical" evidence="2">
    <location>
        <begin position="101"/>
        <end position="121"/>
    </location>
</feature>
<feature type="topological domain" description="Cytoplasmic" evidence="2">
    <location>
        <begin position="122"/>
        <end position="140"/>
    </location>
</feature>
<feature type="domain" description="EGF-like" evidence="3">
    <location>
        <begin position="41"/>
        <end position="81"/>
    </location>
</feature>
<feature type="site" description="Cleavage (By host protease)" evidence="2">
    <location>
        <begin position="96"/>
        <end position="97"/>
    </location>
</feature>
<feature type="glycosylation site" description="N-linked (GlcNAc...) asparagine; by host" evidence="2">
    <location>
        <position position="34"/>
    </location>
</feature>
<feature type="glycosylation site" description="N-linked (GlcNAc...) asparagine; by host" evidence="2">
    <location>
        <position position="95"/>
    </location>
</feature>
<feature type="disulfide bond" evidence="3">
    <location>
        <begin position="45"/>
        <end position="58"/>
    </location>
</feature>
<feature type="disulfide bond" evidence="3">
    <location>
        <begin position="53"/>
        <end position="69"/>
    </location>
</feature>
<feature type="disulfide bond" evidence="3">
    <location>
        <begin position="71"/>
        <end position="80"/>
    </location>
</feature>
<organism>
    <name type="scientific">Variola virus (isolate Human/India/Ind3/1967)</name>
    <name type="common">VARV</name>
    <name type="synonym">Smallpox virus</name>
    <dbReference type="NCBI Taxonomy" id="587200"/>
    <lineage>
        <taxon>Viruses</taxon>
        <taxon>Varidnaviria</taxon>
        <taxon>Bamfordvirae</taxon>
        <taxon>Nucleocytoviricota</taxon>
        <taxon>Pokkesviricetes</taxon>
        <taxon>Chitovirales</taxon>
        <taxon>Poxviridae</taxon>
        <taxon>Chordopoxvirinae</taxon>
        <taxon>Orthopoxvirus</taxon>
        <taxon>Variola virus</taxon>
    </lineage>
</organism>
<organismHost>
    <name type="scientific">Homo sapiens</name>
    <name type="common">Human</name>
    <dbReference type="NCBI Taxonomy" id="9606"/>
</organismHost>